<proteinExistence type="inferred from homology"/>
<dbReference type="EC" id="7.1.1.-" evidence="2"/>
<dbReference type="EMBL" id="AE016828">
    <property type="protein sequence ID" value="AAO90944.1"/>
    <property type="molecule type" value="Genomic_DNA"/>
</dbReference>
<dbReference type="RefSeq" id="NP_820430.1">
    <property type="nucleotide sequence ID" value="NC_002971.4"/>
</dbReference>
<dbReference type="RefSeq" id="WP_005769074.1">
    <property type="nucleotide sequence ID" value="NZ_CDBG01000001.1"/>
</dbReference>
<dbReference type="SMR" id="Q83BQ6"/>
<dbReference type="STRING" id="227377.CBU_1447"/>
<dbReference type="DNASU" id="1209354"/>
<dbReference type="EnsemblBacteria" id="AAO90944">
    <property type="protein sequence ID" value="AAO90944"/>
    <property type="gene ID" value="CBU_1447"/>
</dbReference>
<dbReference type="GeneID" id="1209354"/>
<dbReference type="KEGG" id="cbu:CBU_1447"/>
<dbReference type="PATRIC" id="fig|227377.7.peg.1447"/>
<dbReference type="eggNOG" id="COG0377">
    <property type="taxonomic scope" value="Bacteria"/>
</dbReference>
<dbReference type="HOGENOM" id="CLU_055737_7_3_6"/>
<dbReference type="OrthoDB" id="9786737at2"/>
<dbReference type="Proteomes" id="UP000002671">
    <property type="component" value="Chromosome"/>
</dbReference>
<dbReference type="GO" id="GO:0005886">
    <property type="term" value="C:plasma membrane"/>
    <property type="evidence" value="ECO:0007669"/>
    <property type="project" value="UniProtKB-SubCell"/>
</dbReference>
<dbReference type="GO" id="GO:0045271">
    <property type="term" value="C:respiratory chain complex I"/>
    <property type="evidence" value="ECO:0000318"/>
    <property type="project" value="GO_Central"/>
</dbReference>
<dbReference type="GO" id="GO:0051539">
    <property type="term" value="F:4 iron, 4 sulfur cluster binding"/>
    <property type="evidence" value="ECO:0007669"/>
    <property type="project" value="UniProtKB-KW"/>
</dbReference>
<dbReference type="GO" id="GO:0005506">
    <property type="term" value="F:iron ion binding"/>
    <property type="evidence" value="ECO:0007669"/>
    <property type="project" value="UniProtKB-UniRule"/>
</dbReference>
<dbReference type="GO" id="GO:0008137">
    <property type="term" value="F:NADH dehydrogenase (ubiquinone) activity"/>
    <property type="evidence" value="ECO:0000318"/>
    <property type="project" value="GO_Central"/>
</dbReference>
<dbReference type="GO" id="GO:0050136">
    <property type="term" value="F:NADH:ubiquinone reductase (non-electrogenic) activity"/>
    <property type="evidence" value="ECO:0007669"/>
    <property type="project" value="UniProtKB-UniRule"/>
</dbReference>
<dbReference type="GO" id="GO:0048038">
    <property type="term" value="F:quinone binding"/>
    <property type="evidence" value="ECO:0007669"/>
    <property type="project" value="UniProtKB-KW"/>
</dbReference>
<dbReference type="GO" id="GO:0009060">
    <property type="term" value="P:aerobic respiration"/>
    <property type="evidence" value="ECO:0000318"/>
    <property type="project" value="GO_Central"/>
</dbReference>
<dbReference type="GO" id="GO:0015990">
    <property type="term" value="P:electron transport coupled proton transport"/>
    <property type="evidence" value="ECO:0000318"/>
    <property type="project" value="GO_Central"/>
</dbReference>
<dbReference type="FunFam" id="3.40.50.12280:FF:000001">
    <property type="entry name" value="NADH-quinone oxidoreductase subunit B 2"/>
    <property type="match status" value="1"/>
</dbReference>
<dbReference type="Gene3D" id="3.40.50.12280">
    <property type="match status" value="1"/>
</dbReference>
<dbReference type="HAMAP" id="MF_01356">
    <property type="entry name" value="NDH1_NuoB"/>
    <property type="match status" value="1"/>
</dbReference>
<dbReference type="InterPro" id="IPR006137">
    <property type="entry name" value="NADH_UbQ_OxRdtase-like_20kDa"/>
</dbReference>
<dbReference type="InterPro" id="IPR006138">
    <property type="entry name" value="NADH_UQ_OxRdtase_20Kd_su"/>
</dbReference>
<dbReference type="NCBIfam" id="TIGR01957">
    <property type="entry name" value="nuoB_fam"/>
    <property type="match status" value="1"/>
</dbReference>
<dbReference type="NCBIfam" id="NF005012">
    <property type="entry name" value="PRK06411.1"/>
    <property type="match status" value="1"/>
</dbReference>
<dbReference type="PANTHER" id="PTHR11995">
    <property type="entry name" value="NADH DEHYDROGENASE"/>
    <property type="match status" value="1"/>
</dbReference>
<dbReference type="PANTHER" id="PTHR11995:SF14">
    <property type="entry name" value="NADH DEHYDROGENASE [UBIQUINONE] IRON-SULFUR PROTEIN 7, MITOCHONDRIAL"/>
    <property type="match status" value="1"/>
</dbReference>
<dbReference type="Pfam" id="PF01058">
    <property type="entry name" value="Oxidored_q6"/>
    <property type="match status" value="1"/>
</dbReference>
<dbReference type="SUPFAM" id="SSF56770">
    <property type="entry name" value="HydA/Nqo6-like"/>
    <property type="match status" value="1"/>
</dbReference>
<dbReference type="PROSITE" id="PS01150">
    <property type="entry name" value="COMPLEX1_20K"/>
    <property type="match status" value="1"/>
</dbReference>
<keyword id="KW-0004">4Fe-4S</keyword>
<keyword id="KW-0997">Cell inner membrane</keyword>
<keyword id="KW-1003">Cell membrane</keyword>
<keyword id="KW-0408">Iron</keyword>
<keyword id="KW-0411">Iron-sulfur</keyword>
<keyword id="KW-0472">Membrane</keyword>
<keyword id="KW-0479">Metal-binding</keyword>
<keyword id="KW-0520">NAD</keyword>
<keyword id="KW-0874">Quinone</keyword>
<keyword id="KW-1185">Reference proteome</keyword>
<keyword id="KW-1278">Translocase</keyword>
<keyword id="KW-0813">Transport</keyword>
<keyword id="KW-0830">Ubiquinone</keyword>
<reference key="1">
    <citation type="journal article" date="2003" name="Proc. Natl. Acad. Sci. U.S.A.">
        <title>Complete genome sequence of the Q-fever pathogen, Coxiella burnetii.</title>
        <authorList>
            <person name="Seshadri R."/>
            <person name="Paulsen I.T."/>
            <person name="Eisen J.A."/>
            <person name="Read T.D."/>
            <person name="Nelson K.E."/>
            <person name="Nelson W.C."/>
            <person name="Ward N.L."/>
            <person name="Tettelin H."/>
            <person name="Davidsen T.M."/>
            <person name="Beanan M.J."/>
            <person name="DeBoy R.T."/>
            <person name="Daugherty S.C."/>
            <person name="Brinkac L.M."/>
            <person name="Madupu R."/>
            <person name="Dodson R.J."/>
            <person name="Khouri H.M."/>
            <person name="Lee K.H."/>
            <person name="Carty H.A."/>
            <person name="Scanlan D."/>
            <person name="Heinzen R.A."/>
            <person name="Thompson H.A."/>
            <person name="Samuel J.E."/>
            <person name="Fraser C.M."/>
            <person name="Heidelberg J.F."/>
        </authorList>
    </citation>
    <scope>NUCLEOTIDE SEQUENCE [LARGE SCALE GENOMIC DNA]</scope>
    <source>
        <strain>RSA 493 / Nine Mile phase I</strain>
    </source>
</reference>
<evidence type="ECO:0000250" key="1"/>
<evidence type="ECO:0000255" key="2">
    <source>
        <dbReference type="HAMAP-Rule" id="MF_01356"/>
    </source>
</evidence>
<protein>
    <recommendedName>
        <fullName evidence="2">NADH-quinone oxidoreductase subunit B</fullName>
        <ecNumber evidence="2">7.1.1.-</ecNumber>
    </recommendedName>
    <alternativeName>
        <fullName evidence="2">NADH dehydrogenase I subunit B</fullName>
    </alternativeName>
    <alternativeName>
        <fullName evidence="2">NDH-1 subunit B</fullName>
    </alternativeName>
</protein>
<accession>Q83BQ6</accession>
<feature type="chain" id="PRO_0000358395" description="NADH-quinone oxidoreductase subunit B">
    <location>
        <begin position="1"/>
        <end position="161"/>
    </location>
</feature>
<feature type="binding site" evidence="2">
    <location>
        <position position="36"/>
    </location>
    <ligand>
        <name>[4Fe-4S] cluster</name>
        <dbReference type="ChEBI" id="CHEBI:49883"/>
    </ligand>
</feature>
<feature type="binding site" evidence="2">
    <location>
        <position position="37"/>
    </location>
    <ligand>
        <name>[4Fe-4S] cluster</name>
        <dbReference type="ChEBI" id="CHEBI:49883"/>
    </ligand>
</feature>
<feature type="binding site" evidence="2">
    <location>
        <position position="102"/>
    </location>
    <ligand>
        <name>[4Fe-4S] cluster</name>
        <dbReference type="ChEBI" id="CHEBI:49883"/>
    </ligand>
</feature>
<feature type="binding site" evidence="2">
    <location>
        <position position="132"/>
    </location>
    <ligand>
        <name>[4Fe-4S] cluster</name>
        <dbReference type="ChEBI" id="CHEBI:49883"/>
    </ligand>
</feature>
<name>NUOB_COXBU</name>
<gene>
    <name evidence="2" type="primary">nuoB</name>
    <name type="ordered locus">CBU_1447</name>
</gene>
<sequence length="161" mass="18160">MQQLLTKEGFLLTSLDDLMRWARSGSLWPMTFGLACCAVEMMQCASSRYDLDRFGAGLFRPSPRQSDVMIVAGTLCNKMAPALRKVYDQMAEPRWVISMGSCANGGGYYHYAYSVVRGCDRIVPVDVYVPGCPPTAEALFYGIMQLRNKIRYRNIFDRKDA</sequence>
<organism>
    <name type="scientific">Coxiella burnetii (strain RSA 493 / Nine Mile phase I)</name>
    <dbReference type="NCBI Taxonomy" id="227377"/>
    <lineage>
        <taxon>Bacteria</taxon>
        <taxon>Pseudomonadati</taxon>
        <taxon>Pseudomonadota</taxon>
        <taxon>Gammaproteobacteria</taxon>
        <taxon>Legionellales</taxon>
        <taxon>Coxiellaceae</taxon>
        <taxon>Coxiella</taxon>
    </lineage>
</organism>
<comment type="function">
    <text evidence="1">NDH-1 shuttles electrons from NADH, via FMN and iron-sulfur (Fe-S) centers, to quinones in the respiratory chain. Couples the redox reaction to proton translocation (for every two electrons transferred, four hydrogen ions are translocated across the cytoplasmic membrane), and thus conserves the redox energy in a proton gradient (By similarity).</text>
</comment>
<comment type="catalytic activity">
    <reaction evidence="2">
        <text>a quinone + NADH + 5 H(+)(in) = a quinol + NAD(+) + 4 H(+)(out)</text>
        <dbReference type="Rhea" id="RHEA:57888"/>
        <dbReference type="ChEBI" id="CHEBI:15378"/>
        <dbReference type="ChEBI" id="CHEBI:24646"/>
        <dbReference type="ChEBI" id="CHEBI:57540"/>
        <dbReference type="ChEBI" id="CHEBI:57945"/>
        <dbReference type="ChEBI" id="CHEBI:132124"/>
    </reaction>
</comment>
<comment type="cofactor">
    <cofactor evidence="2">
        <name>[4Fe-4S] cluster</name>
        <dbReference type="ChEBI" id="CHEBI:49883"/>
    </cofactor>
    <text evidence="2">Binds 1 [4Fe-4S] cluster.</text>
</comment>
<comment type="subunit">
    <text evidence="2">NDH-1 is composed of 14 different subunits. Subunits NuoB, C, D, E, F, and G constitute the peripheral sector of the complex.</text>
</comment>
<comment type="subcellular location">
    <subcellularLocation>
        <location evidence="2">Cell inner membrane</location>
        <topology evidence="2">Peripheral membrane protein</topology>
        <orientation evidence="2">Cytoplasmic side</orientation>
    </subcellularLocation>
</comment>
<comment type="similarity">
    <text evidence="2">Belongs to the complex I 20 kDa subunit family.</text>
</comment>